<dbReference type="EC" id="2.5.1.16" evidence="1"/>
<dbReference type="EMBL" id="CP000241">
    <property type="protein sequence ID" value="ABF84885.1"/>
    <property type="molecule type" value="Genomic_DNA"/>
</dbReference>
<dbReference type="RefSeq" id="WP_000265057.1">
    <property type="nucleotide sequence ID" value="NC_008086.1"/>
</dbReference>
<dbReference type="SMR" id="Q1CT37"/>
<dbReference type="KEGG" id="hpa:HPAG1_0818"/>
<dbReference type="HOGENOM" id="CLU_048199_0_0_7"/>
<dbReference type="UniPathway" id="UPA00248">
    <property type="reaction ID" value="UER00314"/>
</dbReference>
<dbReference type="GO" id="GO:0005829">
    <property type="term" value="C:cytosol"/>
    <property type="evidence" value="ECO:0007669"/>
    <property type="project" value="TreeGrafter"/>
</dbReference>
<dbReference type="GO" id="GO:0004766">
    <property type="term" value="F:spermidine synthase activity"/>
    <property type="evidence" value="ECO:0007669"/>
    <property type="project" value="UniProtKB-UniRule"/>
</dbReference>
<dbReference type="GO" id="GO:0008295">
    <property type="term" value="P:spermidine biosynthetic process"/>
    <property type="evidence" value="ECO:0007669"/>
    <property type="project" value="UniProtKB-UniRule"/>
</dbReference>
<dbReference type="FunFam" id="3.40.50.150:FF:000466">
    <property type="entry name" value="Polyamine aminopropyltransferase"/>
    <property type="match status" value="1"/>
</dbReference>
<dbReference type="Gene3D" id="2.30.140.10">
    <property type="entry name" value="Spermidine synthase, tetramerisation domain"/>
    <property type="match status" value="1"/>
</dbReference>
<dbReference type="Gene3D" id="3.40.50.150">
    <property type="entry name" value="Vaccinia Virus protein VP39"/>
    <property type="match status" value="1"/>
</dbReference>
<dbReference type="HAMAP" id="MF_00198">
    <property type="entry name" value="Spermidine_synth"/>
    <property type="match status" value="1"/>
</dbReference>
<dbReference type="InterPro" id="IPR030374">
    <property type="entry name" value="PABS"/>
</dbReference>
<dbReference type="InterPro" id="IPR029063">
    <property type="entry name" value="SAM-dependent_MTases_sf"/>
</dbReference>
<dbReference type="InterPro" id="IPR001045">
    <property type="entry name" value="Spermi_synthase"/>
</dbReference>
<dbReference type="InterPro" id="IPR035246">
    <property type="entry name" value="Spermidine_synt_N"/>
</dbReference>
<dbReference type="InterPro" id="IPR037163">
    <property type="entry name" value="Spermidine_synt_N_sf"/>
</dbReference>
<dbReference type="NCBIfam" id="NF001811">
    <property type="entry name" value="PRK00536.1"/>
    <property type="match status" value="1"/>
</dbReference>
<dbReference type="PANTHER" id="PTHR11558:SF11">
    <property type="entry name" value="SPERMIDINE SYNTHASE"/>
    <property type="match status" value="1"/>
</dbReference>
<dbReference type="PANTHER" id="PTHR11558">
    <property type="entry name" value="SPERMIDINE/SPERMINE SYNTHASE"/>
    <property type="match status" value="1"/>
</dbReference>
<dbReference type="Pfam" id="PF17284">
    <property type="entry name" value="Spermine_synt_N"/>
    <property type="match status" value="1"/>
</dbReference>
<dbReference type="Pfam" id="PF01564">
    <property type="entry name" value="Spermine_synth"/>
    <property type="match status" value="1"/>
</dbReference>
<dbReference type="SUPFAM" id="SSF53335">
    <property type="entry name" value="S-adenosyl-L-methionine-dependent methyltransferases"/>
    <property type="match status" value="1"/>
</dbReference>
<dbReference type="PROSITE" id="PS51006">
    <property type="entry name" value="PABS_2"/>
    <property type="match status" value="1"/>
</dbReference>
<sequence>MWITQEITPYLRKEYTIEAKLLDVRSEHNILEIFKSKDFGEIAMLNCQLLFKNFLHIESELLAHMGGCTKKELKEVLIVDGFDLELAHQLFKYDTHIDFVQADEKILDSFISFFPHFHEVKNNKNFTHAKQLLDLDIKKYDLILCLQEPDIHKMDGLKRMLKEDGVFISVAKHPLLEHVSMQNALKNMGGVFSVAMPFVAPLRILSNKGYIYASFKTHPLKDLMTPKIEALTSMRYYNEDIHRAAFALPKNLQEVFKDNIKS</sequence>
<protein>
    <recommendedName>
        <fullName evidence="1">Polyamine aminopropyltransferase</fullName>
    </recommendedName>
    <alternativeName>
        <fullName evidence="1">Putrescine aminopropyltransferase</fullName>
        <shortName evidence="1">PAPT</shortName>
    </alternativeName>
    <alternativeName>
        <fullName evidence="1">Spermidine synthase</fullName>
        <shortName evidence="1">SPDS</shortName>
        <shortName evidence="1">SPDSY</shortName>
        <ecNumber evidence="1">2.5.1.16</ecNumber>
    </alternativeName>
</protein>
<name>SPEE_HELPH</name>
<proteinExistence type="inferred from homology"/>
<organism>
    <name type="scientific">Helicobacter pylori (strain HPAG1)</name>
    <dbReference type="NCBI Taxonomy" id="357544"/>
    <lineage>
        <taxon>Bacteria</taxon>
        <taxon>Pseudomonadati</taxon>
        <taxon>Campylobacterota</taxon>
        <taxon>Epsilonproteobacteria</taxon>
        <taxon>Campylobacterales</taxon>
        <taxon>Helicobacteraceae</taxon>
        <taxon>Helicobacter</taxon>
    </lineage>
</organism>
<accession>Q1CT37</accession>
<comment type="function">
    <text evidence="1">Catalyzes the irreversible transfer of a propylamine group from the amino donor S-adenosylmethioninamine (decarboxy-AdoMet) to putrescine (1,4-diaminobutane) to yield spermidine.</text>
</comment>
<comment type="catalytic activity">
    <reaction evidence="1">
        <text>S-adenosyl 3-(methylsulfanyl)propylamine + putrescine = S-methyl-5'-thioadenosine + spermidine + H(+)</text>
        <dbReference type="Rhea" id="RHEA:12721"/>
        <dbReference type="ChEBI" id="CHEBI:15378"/>
        <dbReference type="ChEBI" id="CHEBI:17509"/>
        <dbReference type="ChEBI" id="CHEBI:57443"/>
        <dbReference type="ChEBI" id="CHEBI:57834"/>
        <dbReference type="ChEBI" id="CHEBI:326268"/>
        <dbReference type="EC" id="2.5.1.16"/>
    </reaction>
</comment>
<comment type="pathway">
    <text evidence="1">Amine and polyamine biosynthesis; spermidine biosynthesis; spermidine from putrescine: step 1/1.</text>
</comment>
<comment type="subunit">
    <text evidence="1">Homodimer or homotetramer.</text>
</comment>
<comment type="subcellular location">
    <subcellularLocation>
        <location evidence="1">Cytoplasm</location>
    </subcellularLocation>
</comment>
<comment type="similarity">
    <text evidence="1">Belongs to the spermidine/spermine synthase family.</text>
</comment>
<reference key="1">
    <citation type="journal article" date="2006" name="Proc. Natl. Acad. Sci. U.S.A.">
        <title>The complete genome sequence of a chronic atrophic gastritis Helicobacter pylori strain: evolution during disease progression.</title>
        <authorList>
            <person name="Oh J.D."/>
            <person name="Kling-Baeckhed H."/>
            <person name="Giannakis M."/>
            <person name="Xu J."/>
            <person name="Fulton R.S."/>
            <person name="Fulton L.A."/>
            <person name="Cordum H.S."/>
            <person name="Wang C."/>
            <person name="Elliott G."/>
            <person name="Edwards J."/>
            <person name="Mardis E.R."/>
            <person name="Engstrand L.G."/>
            <person name="Gordon J.I."/>
        </authorList>
    </citation>
    <scope>NUCLEOTIDE SEQUENCE [LARGE SCALE GENOMIC DNA]</scope>
    <source>
        <strain>HPAG1</strain>
    </source>
</reference>
<gene>
    <name evidence="1" type="primary">speE</name>
    <name type="ordered locus">HPAG1_0818</name>
</gene>
<evidence type="ECO:0000255" key="1">
    <source>
        <dbReference type="HAMAP-Rule" id="MF_00198"/>
    </source>
</evidence>
<feature type="chain" id="PRO_1000012002" description="Polyamine aminopropyltransferase">
    <location>
        <begin position="1"/>
        <end position="262"/>
    </location>
</feature>
<feature type="domain" description="PABS" evidence="1">
    <location>
        <begin position="1"/>
        <end position="249"/>
    </location>
</feature>
<feature type="active site" description="Proton acceptor" evidence="1">
    <location>
        <position position="155"/>
    </location>
</feature>
<feature type="binding site" evidence="1">
    <location>
        <position position="29"/>
    </location>
    <ligand>
        <name>S-methyl-5'-thioadenosine</name>
        <dbReference type="ChEBI" id="CHEBI:17509"/>
    </ligand>
</feature>
<feature type="binding site" evidence="1">
    <location>
        <position position="83"/>
    </location>
    <ligand>
        <name>spermidine</name>
        <dbReference type="ChEBI" id="CHEBI:57834"/>
    </ligand>
</feature>
<keyword id="KW-0963">Cytoplasm</keyword>
<keyword id="KW-0620">Polyamine biosynthesis</keyword>
<keyword id="KW-0745">Spermidine biosynthesis</keyword>
<keyword id="KW-0808">Transferase</keyword>